<sequence>MDTAQFHTMLEEKGISLSSQALAQFERYYELLMEWNEKMNLTAITDKPSVYLKHFFDSLSPAFYYDFSQSLSICDVGAGAGFPSVPLKICFPHLKLSIVDSLQKRITFLEHLAAELGLTDVAFYHDRAETFGRKKEFRESFDIVTARAVARMSVLSELCLPLVKVNGTFIAMKAASAQEELEQGKKAIDVLGGEISAIERFMLPIEQSERTIIFIQKVRNTPNKYPRKPGMPNKQPIQ</sequence>
<keyword id="KW-0963">Cytoplasm</keyword>
<keyword id="KW-0489">Methyltransferase</keyword>
<keyword id="KW-0698">rRNA processing</keyword>
<keyword id="KW-0949">S-adenosyl-L-methionine</keyword>
<keyword id="KW-0808">Transferase</keyword>
<protein>
    <recommendedName>
        <fullName evidence="1">Ribosomal RNA small subunit methyltransferase G</fullName>
        <ecNumber evidence="1">2.1.1.-</ecNumber>
    </recommendedName>
    <alternativeName>
        <fullName evidence="1">16S rRNA 7-methylguanosine methyltransferase</fullName>
        <shortName evidence="1">16S rRNA m7G methyltransferase</shortName>
    </alternativeName>
</protein>
<evidence type="ECO:0000255" key="1">
    <source>
        <dbReference type="HAMAP-Rule" id="MF_00074"/>
    </source>
</evidence>
<name>RSMG_GEOSW</name>
<feature type="chain" id="PRO_1000202502" description="Ribosomal RNA small subunit methyltransferase G">
    <location>
        <begin position="1"/>
        <end position="238"/>
    </location>
</feature>
<feature type="binding site" evidence="1">
    <location>
        <position position="77"/>
    </location>
    <ligand>
        <name>S-adenosyl-L-methionine</name>
        <dbReference type="ChEBI" id="CHEBI:59789"/>
    </ligand>
</feature>
<feature type="binding site" evidence="1">
    <location>
        <position position="82"/>
    </location>
    <ligand>
        <name>S-adenosyl-L-methionine</name>
        <dbReference type="ChEBI" id="CHEBI:59789"/>
    </ligand>
</feature>
<feature type="binding site" evidence="1">
    <location>
        <begin position="128"/>
        <end position="129"/>
    </location>
    <ligand>
        <name>S-adenosyl-L-methionine</name>
        <dbReference type="ChEBI" id="CHEBI:59789"/>
    </ligand>
</feature>
<feature type="binding site" evidence="1">
    <location>
        <position position="147"/>
    </location>
    <ligand>
        <name>S-adenosyl-L-methionine</name>
        <dbReference type="ChEBI" id="CHEBI:59789"/>
    </ligand>
</feature>
<gene>
    <name evidence="1" type="primary">rsmG</name>
    <name type="ordered locus">GWCH70_3427</name>
</gene>
<proteinExistence type="inferred from homology"/>
<comment type="function">
    <text evidence="1">Specifically methylates the N7 position of guanine in position 535 of 16S rRNA.</text>
</comment>
<comment type="subcellular location">
    <subcellularLocation>
        <location evidence="1">Cytoplasm</location>
    </subcellularLocation>
</comment>
<comment type="similarity">
    <text evidence="1">Belongs to the methyltransferase superfamily. RNA methyltransferase RsmG family.</text>
</comment>
<reference key="1">
    <citation type="submission" date="2009-06" db="EMBL/GenBank/DDBJ databases">
        <title>Complete sequence of chromosome of Geopacillus sp. WCH70.</title>
        <authorList>
            <consortium name="US DOE Joint Genome Institute"/>
            <person name="Lucas S."/>
            <person name="Copeland A."/>
            <person name="Lapidus A."/>
            <person name="Glavina del Rio T."/>
            <person name="Dalin E."/>
            <person name="Tice H."/>
            <person name="Bruce D."/>
            <person name="Goodwin L."/>
            <person name="Pitluck S."/>
            <person name="Chertkov O."/>
            <person name="Brettin T."/>
            <person name="Detter J.C."/>
            <person name="Han C."/>
            <person name="Larimer F."/>
            <person name="Land M."/>
            <person name="Hauser L."/>
            <person name="Kyrpides N."/>
            <person name="Mikhailova N."/>
            <person name="Brumm P."/>
            <person name="Mead D.A."/>
            <person name="Richardson P."/>
        </authorList>
    </citation>
    <scope>NUCLEOTIDE SEQUENCE [LARGE SCALE GENOMIC DNA]</scope>
    <source>
        <strain>WCH70</strain>
    </source>
</reference>
<dbReference type="EC" id="2.1.1.-" evidence="1"/>
<dbReference type="EMBL" id="CP001638">
    <property type="protein sequence ID" value="ACS26063.1"/>
    <property type="molecule type" value="Genomic_DNA"/>
</dbReference>
<dbReference type="SMR" id="C5D9Y5"/>
<dbReference type="STRING" id="471223.GWCH70_3427"/>
<dbReference type="KEGG" id="gwc:GWCH70_3427"/>
<dbReference type="eggNOG" id="COG0357">
    <property type="taxonomic scope" value="Bacteria"/>
</dbReference>
<dbReference type="HOGENOM" id="CLU_065341_0_2_9"/>
<dbReference type="OrthoDB" id="9808773at2"/>
<dbReference type="GO" id="GO:0005829">
    <property type="term" value="C:cytosol"/>
    <property type="evidence" value="ECO:0007669"/>
    <property type="project" value="TreeGrafter"/>
</dbReference>
<dbReference type="GO" id="GO:0070043">
    <property type="term" value="F:rRNA (guanine-N7-)-methyltransferase activity"/>
    <property type="evidence" value="ECO:0007669"/>
    <property type="project" value="UniProtKB-UniRule"/>
</dbReference>
<dbReference type="FunFam" id="3.40.50.150:FF:000041">
    <property type="entry name" value="Ribosomal RNA small subunit methyltransferase G"/>
    <property type="match status" value="1"/>
</dbReference>
<dbReference type="Gene3D" id="3.40.50.150">
    <property type="entry name" value="Vaccinia Virus protein VP39"/>
    <property type="match status" value="1"/>
</dbReference>
<dbReference type="HAMAP" id="MF_00074">
    <property type="entry name" value="16SrRNA_methyltr_G"/>
    <property type="match status" value="1"/>
</dbReference>
<dbReference type="InterPro" id="IPR003682">
    <property type="entry name" value="rRNA_ssu_MeTfrase_G"/>
</dbReference>
<dbReference type="InterPro" id="IPR029063">
    <property type="entry name" value="SAM-dependent_MTases_sf"/>
</dbReference>
<dbReference type="NCBIfam" id="TIGR00138">
    <property type="entry name" value="rsmG_gidB"/>
    <property type="match status" value="1"/>
</dbReference>
<dbReference type="PANTHER" id="PTHR31760">
    <property type="entry name" value="S-ADENOSYL-L-METHIONINE-DEPENDENT METHYLTRANSFERASES SUPERFAMILY PROTEIN"/>
    <property type="match status" value="1"/>
</dbReference>
<dbReference type="PANTHER" id="PTHR31760:SF0">
    <property type="entry name" value="S-ADENOSYL-L-METHIONINE-DEPENDENT METHYLTRANSFERASES SUPERFAMILY PROTEIN"/>
    <property type="match status" value="1"/>
</dbReference>
<dbReference type="Pfam" id="PF02527">
    <property type="entry name" value="GidB"/>
    <property type="match status" value="1"/>
</dbReference>
<dbReference type="PIRSF" id="PIRSF003078">
    <property type="entry name" value="GidB"/>
    <property type="match status" value="1"/>
</dbReference>
<dbReference type="SUPFAM" id="SSF53335">
    <property type="entry name" value="S-adenosyl-L-methionine-dependent methyltransferases"/>
    <property type="match status" value="1"/>
</dbReference>
<organism>
    <name type="scientific">Geobacillus sp. (strain WCH70)</name>
    <dbReference type="NCBI Taxonomy" id="471223"/>
    <lineage>
        <taxon>Bacteria</taxon>
        <taxon>Bacillati</taxon>
        <taxon>Bacillota</taxon>
        <taxon>Bacilli</taxon>
        <taxon>Bacillales</taxon>
        <taxon>Anoxybacillaceae</taxon>
        <taxon>Geobacillus</taxon>
    </lineage>
</organism>
<accession>C5D9Y5</accession>